<sequence length="295" mass="32622">MAWIQIRLNSTNEKAEQMSDFLEEIGSVSVTFMDSQDTPIFEPLPGETRLWGNTDVIALFDAETDMAEIVRLLKEAKHLDSNTAYKIEQIEDKDWEREWMDNFHPMQFGKRLWICPSWRDVPDENAVNVMLDPGLAFGTGTHPTTALCLEWLDGLDLKDKSVIDFGCGSGILAIAALKLGAKSAVGIDIDPQAILASRNNAEQNGVADRLQLFLSDEKPSDLKADVVVANILAGPLKELYPIISQLVKPNGDLGLSGILETQAQSVCDAYTQTFALEPVAAREEWCRITGKLKTL</sequence>
<comment type="function">
    <text evidence="1">Methylates ribosomal protein L11.</text>
</comment>
<comment type="catalytic activity">
    <reaction evidence="1">
        <text>L-lysyl-[protein] + 3 S-adenosyl-L-methionine = N(6),N(6),N(6)-trimethyl-L-lysyl-[protein] + 3 S-adenosyl-L-homocysteine + 3 H(+)</text>
        <dbReference type="Rhea" id="RHEA:54192"/>
        <dbReference type="Rhea" id="RHEA-COMP:9752"/>
        <dbReference type="Rhea" id="RHEA-COMP:13826"/>
        <dbReference type="ChEBI" id="CHEBI:15378"/>
        <dbReference type="ChEBI" id="CHEBI:29969"/>
        <dbReference type="ChEBI" id="CHEBI:57856"/>
        <dbReference type="ChEBI" id="CHEBI:59789"/>
        <dbReference type="ChEBI" id="CHEBI:61961"/>
    </reaction>
</comment>
<comment type="subcellular location">
    <subcellularLocation>
        <location evidence="1">Cytoplasm</location>
    </subcellularLocation>
</comment>
<comment type="similarity">
    <text evidence="1">Belongs to the methyltransferase superfamily. PrmA family.</text>
</comment>
<name>PRMA_HAEIE</name>
<protein>
    <recommendedName>
        <fullName evidence="1">Ribosomal protein L11 methyltransferase</fullName>
        <shortName evidence="1">L11 Mtase</shortName>
        <ecNumber evidence="1">2.1.1.-</ecNumber>
    </recommendedName>
</protein>
<organism>
    <name type="scientific">Haemophilus influenzae (strain PittEE)</name>
    <dbReference type="NCBI Taxonomy" id="374930"/>
    <lineage>
        <taxon>Bacteria</taxon>
        <taxon>Pseudomonadati</taxon>
        <taxon>Pseudomonadota</taxon>
        <taxon>Gammaproteobacteria</taxon>
        <taxon>Pasteurellales</taxon>
        <taxon>Pasteurellaceae</taxon>
        <taxon>Haemophilus</taxon>
    </lineage>
</organism>
<proteinExistence type="inferred from homology"/>
<feature type="chain" id="PRO_1000046028" description="Ribosomal protein L11 methyltransferase">
    <location>
        <begin position="1"/>
        <end position="295"/>
    </location>
</feature>
<feature type="binding site" evidence="1">
    <location>
        <position position="145"/>
    </location>
    <ligand>
        <name>S-adenosyl-L-methionine</name>
        <dbReference type="ChEBI" id="CHEBI:59789"/>
    </ligand>
</feature>
<feature type="binding site" evidence="1">
    <location>
        <position position="166"/>
    </location>
    <ligand>
        <name>S-adenosyl-L-methionine</name>
        <dbReference type="ChEBI" id="CHEBI:59789"/>
    </ligand>
</feature>
<feature type="binding site" evidence="1">
    <location>
        <position position="188"/>
    </location>
    <ligand>
        <name>S-adenosyl-L-methionine</name>
        <dbReference type="ChEBI" id="CHEBI:59789"/>
    </ligand>
</feature>
<feature type="binding site" evidence="1">
    <location>
        <position position="230"/>
    </location>
    <ligand>
        <name>S-adenosyl-L-methionine</name>
        <dbReference type="ChEBI" id="CHEBI:59789"/>
    </ligand>
</feature>
<gene>
    <name evidence="1" type="primary">prmA</name>
    <name type="ordered locus">CGSHiEE_07075</name>
</gene>
<evidence type="ECO:0000255" key="1">
    <source>
        <dbReference type="HAMAP-Rule" id="MF_00735"/>
    </source>
</evidence>
<keyword id="KW-0963">Cytoplasm</keyword>
<keyword id="KW-0489">Methyltransferase</keyword>
<keyword id="KW-0949">S-adenosyl-L-methionine</keyword>
<keyword id="KW-0808">Transferase</keyword>
<reference key="1">
    <citation type="journal article" date="2007" name="Genome Biol.">
        <title>Characterization and modeling of the Haemophilus influenzae core and supragenomes based on the complete genomic sequences of Rd and 12 clinical nontypeable strains.</title>
        <authorList>
            <person name="Hogg J.S."/>
            <person name="Hu F.Z."/>
            <person name="Janto B."/>
            <person name="Boissy R."/>
            <person name="Hayes J."/>
            <person name="Keefe R."/>
            <person name="Post J.C."/>
            <person name="Ehrlich G.D."/>
        </authorList>
    </citation>
    <scope>NUCLEOTIDE SEQUENCE [LARGE SCALE GENOMIC DNA]</scope>
    <source>
        <strain>PittEE</strain>
    </source>
</reference>
<dbReference type="EC" id="2.1.1.-" evidence="1"/>
<dbReference type="EMBL" id="CP000671">
    <property type="protein sequence ID" value="ABQ98744.1"/>
    <property type="molecule type" value="Genomic_DNA"/>
</dbReference>
<dbReference type="SMR" id="A5UD93"/>
<dbReference type="KEGG" id="hip:CGSHiEE_07075"/>
<dbReference type="HOGENOM" id="CLU_049382_4_1_6"/>
<dbReference type="GO" id="GO:0005829">
    <property type="term" value="C:cytosol"/>
    <property type="evidence" value="ECO:0007669"/>
    <property type="project" value="TreeGrafter"/>
</dbReference>
<dbReference type="GO" id="GO:0016279">
    <property type="term" value="F:protein-lysine N-methyltransferase activity"/>
    <property type="evidence" value="ECO:0007669"/>
    <property type="project" value="TreeGrafter"/>
</dbReference>
<dbReference type="GO" id="GO:0032259">
    <property type="term" value="P:methylation"/>
    <property type="evidence" value="ECO:0007669"/>
    <property type="project" value="UniProtKB-KW"/>
</dbReference>
<dbReference type="CDD" id="cd02440">
    <property type="entry name" value="AdoMet_MTases"/>
    <property type="match status" value="1"/>
</dbReference>
<dbReference type="Gene3D" id="3.40.50.150">
    <property type="entry name" value="Vaccinia Virus protein VP39"/>
    <property type="match status" value="1"/>
</dbReference>
<dbReference type="HAMAP" id="MF_00735">
    <property type="entry name" value="Methyltr_PrmA"/>
    <property type="match status" value="1"/>
</dbReference>
<dbReference type="InterPro" id="IPR050078">
    <property type="entry name" value="Ribosomal_L11_MeTrfase_PrmA"/>
</dbReference>
<dbReference type="InterPro" id="IPR004498">
    <property type="entry name" value="Ribosomal_PrmA_MeTrfase"/>
</dbReference>
<dbReference type="InterPro" id="IPR029063">
    <property type="entry name" value="SAM-dependent_MTases_sf"/>
</dbReference>
<dbReference type="NCBIfam" id="TIGR00406">
    <property type="entry name" value="prmA"/>
    <property type="match status" value="1"/>
</dbReference>
<dbReference type="PANTHER" id="PTHR43648">
    <property type="entry name" value="ELECTRON TRANSFER FLAVOPROTEIN BETA SUBUNIT LYSINE METHYLTRANSFERASE"/>
    <property type="match status" value="1"/>
</dbReference>
<dbReference type="PANTHER" id="PTHR43648:SF1">
    <property type="entry name" value="ELECTRON TRANSFER FLAVOPROTEIN BETA SUBUNIT LYSINE METHYLTRANSFERASE"/>
    <property type="match status" value="1"/>
</dbReference>
<dbReference type="Pfam" id="PF06325">
    <property type="entry name" value="PrmA"/>
    <property type="match status" value="1"/>
</dbReference>
<dbReference type="PIRSF" id="PIRSF000401">
    <property type="entry name" value="RPL11_MTase"/>
    <property type="match status" value="1"/>
</dbReference>
<dbReference type="SUPFAM" id="SSF53335">
    <property type="entry name" value="S-adenosyl-L-methionine-dependent methyltransferases"/>
    <property type="match status" value="1"/>
</dbReference>
<accession>A5UD93</accession>